<sequence length="430" mass="47518">MSYTKLLTQLSFPNRISGPILETSLSDVSIGEICNIQAGIESNEIVARAQVVGFHDEKTILSLIGNSRGLSRQTLIKPTAQFLHTQVGRGLLGAVVNPLGEVTDKFAVTDNSEILYRPVDNAPPLYSERAAIEKPFLTGIKVIDSLLTCGEGQRMGIFASAGCGKTFLMNMLIEHSGADIYVIGLIGERGREVTETVDYLKNSEKKSRCVLVYATSDYSSVDRCNAAYIATAIAEFFRTEGHKVALFIDSLTRYARALRDVALAAGESPARRGYPVSVFDSLPRLLERPGKLKAGGSITAFYTVLLEDDDFADPLAEEVRSILDGHIYLSRNLAQKGQFPAIDSLKSISRVFTQVVDEKHRIMAAAFRELLSEIEELRTIIDFGEYKPGENASQDKIYNKISVVESFLKQDYRLGFTYEQTMELIGETIR</sequence>
<reference key="1">
    <citation type="submission" date="1995-05" db="EMBL/GenBank/DDBJ databases">
        <title>Comparison and high conservation of nucleotide sequences of spa-mxi regions between S.sonnei and S.flexneri -- identification of a new gene coding plausible membrane protein.</title>
        <authorList>
            <person name="Arakawa E."/>
            <person name="Kato J."/>
            <person name="Ito K."/>
            <person name="Watanabe H."/>
        </authorList>
    </citation>
    <scope>NUCLEOTIDE SEQUENCE [GENOMIC DNA]</scope>
    <source>
        <strain>HW383</strain>
    </source>
</reference>
<evidence type="ECO:0000250" key="1">
    <source>
        <dbReference type="UniProtKB" id="P0A1B9"/>
    </source>
</evidence>
<evidence type="ECO:0000250" key="2">
    <source>
        <dbReference type="UniProtKB" id="P0A1C1"/>
    </source>
</evidence>
<evidence type="ECO:0000305" key="3"/>
<name>SCTN_SHISO</name>
<keyword id="KW-0067">ATP-binding</keyword>
<keyword id="KW-0963">Cytoplasm</keyword>
<keyword id="KW-0547">Nucleotide-binding</keyword>
<keyword id="KW-0614">Plasmid</keyword>
<keyword id="KW-0653">Protein transport</keyword>
<keyword id="KW-1278">Translocase</keyword>
<keyword id="KW-0813">Transport</keyword>
<keyword id="KW-0843">Virulence</keyword>
<organism>
    <name type="scientific">Shigella sonnei</name>
    <dbReference type="NCBI Taxonomy" id="624"/>
    <lineage>
        <taxon>Bacteria</taxon>
        <taxon>Pseudomonadati</taxon>
        <taxon>Pseudomonadota</taxon>
        <taxon>Gammaproteobacteria</taxon>
        <taxon>Enterobacterales</taxon>
        <taxon>Enterobacteriaceae</taxon>
        <taxon>Shigella</taxon>
    </lineage>
</organism>
<protein>
    <recommendedName>
        <fullName evidence="2">Type 3 secretion system ATPase</fullName>
        <shortName evidence="2">T3SS ATPase</shortName>
        <ecNumber evidence="2">7.4.2.8</ecNumber>
    </recommendedName>
</protein>
<accession>P0A1C2</accession>
<accession>P35531</accession>
<feature type="chain" id="PRO_0000144707" description="Type 3 secretion system ATPase">
    <location>
        <begin position="1"/>
        <end position="430"/>
    </location>
</feature>
<feature type="binding site" evidence="2">
    <location>
        <begin position="162"/>
        <end position="167"/>
    </location>
    <ligand>
        <name>ATP</name>
        <dbReference type="ChEBI" id="CHEBI:30616"/>
    </ligand>
</feature>
<gene>
    <name evidence="2" type="primary">sctN</name>
    <name type="synonym">mxiB</name>
    <name type="synonym">spa47</name>
</gene>
<proteinExistence type="inferred from homology"/>
<comment type="function">
    <text evidence="1 2">ATPase component of the type III secretion system (T3SS), also called injectisome, which is used to inject bacterial effector proteins into eukaryotic host cells (By similarity). Acts as a molecular motor to provide the energy that is required for the export of proteins (By similarity). Required for type III secretion apparatus (T3SA) formation, proper protein secretion, host cell invasion and virulence (By similarity). May play a critical role in T3SS substrate recognition, disassembly of the effector/chaperone complex and unfolding of the effector in an ATP-dependent manner prior to secretion (By similarity).</text>
</comment>
<comment type="catalytic activity">
    <reaction evidence="2">
        <text>ATP + H2O + cellular proteinSide 1 = ADP + phosphate + cellular proteinSide 2.</text>
        <dbReference type="EC" id="7.4.2.8"/>
    </reaction>
</comment>
<comment type="subunit">
    <text evidence="2">The core secretion machinery of the T3SS is composed of approximately 20 different proteins, including cytoplasmic components, a base, an export apparatus and a needle (By similarity). This subunit is part of the cytosolic complex (By similarity). Forms homohexamers (By similarity).</text>
</comment>
<comment type="subcellular location">
    <subcellularLocation>
        <location evidence="2">Cytoplasm</location>
    </subcellularLocation>
</comment>
<comment type="similarity">
    <text evidence="3">Belongs to the ATPase alpha/beta chains family. T3SS ATPase subfamily.</text>
</comment>
<geneLocation type="plasmid">
    <name>pINV</name>
</geneLocation>
<dbReference type="EC" id="7.4.2.8" evidence="2"/>
<dbReference type="EMBL" id="D50601">
    <property type="protein sequence ID" value="BAA09158.1"/>
    <property type="molecule type" value="Genomic_DNA"/>
</dbReference>
<dbReference type="SMR" id="P0A1C2"/>
<dbReference type="STRING" id="216599.GCA_000283715_05240"/>
<dbReference type="GO" id="GO:0005737">
    <property type="term" value="C:cytoplasm"/>
    <property type="evidence" value="ECO:0007669"/>
    <property type="project" value="UniProtKB-SubCell"/>
</dbReference>
<dbReference type="GO" id="GO:0030257">
    <property type="term" value="C:type III protein secretion system complex"/>
    <property type="evidence" value="ECO:0007669"/>
    <property type="project" value="InterPro"/>
</dbReference>
<dbReference type="GO" id="GO:0005524">
    <property type="term" value="F:ATP binding"/>
    <property type="evidence" value="ECO:0007669"/>
    <property type="project" value="UniProtKB-KW"/>
</dbReference>
<dbReference type="GO" id="GO:0016887">
    <property type="term" value="F:ATP hydrolysis activity"/>
    <property type="evidence" value="ECO:0007669"/>
    <property type="project" value="InterPro"/>
</dbReference>
<dbReference type="GO" id="GO:0008564">
    <property type="term" value="F:protein-exporting ATPase activity"/>
    <property type="evidence" value="ECO:0007669"/>
    <property type="project" value="UniProtKB-EC"/>
</dbReference>
<dbReference type="GO" id="GO:0046933">
    <property type="term" value="F:proton-transporting ATP synthase activity, rotational mechanism"/>
    <property type="evidence" value="ECO:0007669"/>
    <property type="project" value="TreeGrafter"/>
</dbReference>
<dbReference type="GO" id="GO:0030254">
    <property type="term" value="P:protein secretion by the type III secretion system"/>
    <property type="evidence" value="ECO:0007669"/>
    <property type="project" value="InterPro"/>
</dbReference>
<dbReference type="CDD" id="cd01426">
    <property type="entry name" value="ATP-synt_F1_V1_A1_AB_FliI_N"/>
    <property type="match status" value="1"/>
</dbReference>
<dbReference type="CDD" id="cd01136">
    <property type="entry name" value="ATPase_flagellum-secretory_path_III"/>
    <property type="match status" value="1"/>
</dbReference>
<dbReference type="FunFam" id="3.40.50.12240:FF:000002">
    <property type="entry name" value="Flagellum-specific ATP synthase FliI"/>
    <property type="match status" value="1"/>
</dbReference>
<dbReference type="Gene3D" id="3.40.50.12240">
    <property type="match status" value="1"/>
</dbReference>
<dbReference type="InterPro" id="IPR003593">
    <property type="entry name" value="AAA+_ATPase"/>
</dbReference>
<dbReference type="InterPro" id="IPR020003">
    <property type="entry name" value="ATPase_a/bsu_AS"/>
</dbReference>
<dbReference type="InterPro" id="IPR050053">
    <property type="entry name" value="ATPase_alpha/beta_chains"/>
</dbReference>
<dbReference type="InterPro" id="IPR004100">
    <property type="entry name" value="ATPase_F1/V1/A1_a/bsu_N"/>
</dbReference>
<dbReference type="InterPro" id="IPR000194">
    <property type="entry name" value="ATPase_F1/V1/A1_a/bsu_nucl-bd"/>
</dbReference>
<dbReference type="InterPro" id="IPR005714">
    <property type="entry name" value="ATPase_T3SS_FliI/YscN"/>
</dbReference>
<dbReference type="InterPro" id="IPR027417">
    <property type="entry name" value="P-loop_NTPase"/>
</dbReference>
<dbReference type="InterPro" id="IPR040627">
    <property type="entry name" value="T3SS_ATPase_C"/>
</dbReference>
<dbReference type="NCBIfam" id="TIGR01026">
    <property type="entry name" value="fliI_yscN"/>
    <property type="match status" value="1"/>
</dbReference>
<dbReference type="NCBIfam" id="NF006012">
    <property type="entry name" value="PRK08149.1"/>
    <property type="match status" value="1"/>
</dbReference>
<dbReference type="PANTHER" id="PTHR15184">
    <property type="entry name" value="ATP SYNTHASE"/>
    <property type="match status" value="1"/>
</dbReference>
<dbReference type="PANTHER" id="PTHR15184:SF9">
    <property type="entry name" value="SPI-1 TYPE 3 SECRETION SYSTEM ATPASE"/>
    <property type="match status" value="1"/>
</dbReference>
<dbReference type="Pfam" id="PF00006">
    <property type="entry name" value="ATP-synt_ab"/>
    <property type="match status" value="1"/>
</dbReference>
<dbReference type="Pfam" id="PF02874">
    <property type="entry name" value="ATP-synt_ab_N"/>
    <property type="match status" value="1"/>
</dbReference>
<dbReference type="Pfam" id="PF18269">
    <property type="entry name" value="T3SS_ATPase_C"/>
    <property type="match status" value="1"/>
</dbReference>
<dbReference type="SMART" id="SM00382">
    <property type="entry name" value="AAA"/>
    <property type="match status" value="1"/>
</dbReference>
<dbReference type="SUPFAM" id="SSF52540">
    <property type="entry name" value="P-loop containing nucleoside triphosphate hydrolases"/>
    <property type="match status" value="1"/>
</dbReference>
<dbReference type="PROSITE" id="PS00152">
    <property type="entry name" value="ATPASE_ALPHA_BETA"/>
    <property type="match status" value="1"/>
</dbReference>